<keyword id="KW-0004">4Fe-4S</keyword>
<keyword id="KW-0067">ATP-binding</keyword>
<keyword id="KW-0149">Chlorophyll biosynthesis</keyword>
<keyword id="KW-0150">Chloroplast</keyword>
<keyword id="KW-0408">Iron</keyword>
<keyword id="KW-0411">Iron-sulfur</keyword>
<keyword id="KW-0460">Magnesium</keyword>
<keyword id="KW-0479">Metal-binding</keyword>
<keyword id="KW-0547">Nucleotide-binding</keyword>
<keyword id="KW-0560">Oxidoreductase</keyword>
<keyword id="KW-0602">Photosynthesis</keyword>
<keyword id="KW-0934">Plastid</keyword>
<dbReference type="EC" id="1.3.7.7" evidence="1"/>
<dbReference type="EMBL" id="X56200">
    <property type="protein sequence ID" value="CAA39659.2"/>
    <property type="molecule type" value="Genomic_DNA"/>
</dbReference>
<dbReference type="PIR" id="S17741">
    <property type="entry name" value="S17741"/>
</dbReference>
<dbReference type="RefSeq" id="YP_002905185.1">
    <property type="nucleotide sequence ID" value="NC_011153.4"/>
</dbReference>
<dbReference type="SMR" id="P26181"/>
<dbReference type="GeneID" id="7875095"/>
<dbReference type="UniPathway" id="UPA00670"/>
<dbReference type="GO" id="GO:0009507">
    <property type="term" value="C:chloroplast"/>
    <property type="evidence" value="ECO:0007669"/>
    <property type="project" value="UniProtKB-SubCell"/>
</dbReference>
<dbReference type="GO" id="GO:0051539">
    <property type="term" value="F:4 iron, 4 sulfur cluster binding"/>
    <property type="evidence" value="ECO:0007669"/>
    <property type="project" value="UniProtKB-UniRule"/>
</dbReference>
<dbReference type="GO" id="GO:0005524">
    <property type="term" value="F:ATP binding"/>
    <property type="evidence" value="ECO:0007669"/>
    <property type="project" value="UniProtKB-UniRule"/>
</dbReference>
<dbReference type="GO" id="GO:0046872">
    <property type="term" value="F:metal ion binding"/>
    <property type="evidence" value="ECO:0007669"/>
    <property type="project" value="UniProtKB-KW"/>
</dbReference>
<dbReference type="GO" id="GO:0016730">
    <property type="term" value="F:oxidoreductase activity, acting on iron-sulfur proteins as donors"/>
    <property type="evidence" value="ECO:0007669"/>
    <property type="project" value="InterPro"/>
</dbReference>
<dbReference type="GO" id="GO:0016636">
    <property type="term" value="F:oxidoreductase activity, acting on the CH-CH group of donors, iron-sulfur protein as acceptor"/>
    <property type="evidence" value="ECO:0007669"/>
    <property type="project" value="UniProtKB-UniRule"/>
</dbReference>
<dbReference type="GO" id="GO:0036068">
    <property type="term" value="P:light-independent chlorophyll biosynthetic process"/>
    <property type="evidence" value="ECO:0007669"/>
    <property type="project" value="UniProtKB-UniRule"/>
</dbReference>
<dbReference type="GO" id="GO:0019685">
    <property type="term" value="P:photosynthesis, dark reaction"/>
    <property type="evidence" value="ECO:0007669"/>
    <property type="project" value="InterPro"/>
</dbReference>
<dbReference type="CDD" id="cd02032">
    <property type="entry name" value="Bchl-like"/>
    <property type="match status" value="1"/>
</dbReference>
<dbReference type="Gene3D" id="3.40.50.300">
    <property type="entry name" value="P-loop containing nucleotide triphosphate hydrolases"/>
    <property type="match status" value="1"/>
</dbReference>
<dbReference type="HAMAP" id="MF_00355">
    <property type="entry name" value="ChlL_BchL"/>
    <property type="match status" value="1"/>
</dbReference>
<dbReference type="InterPro" id="IPR030655">
    <property type="entry name" value="NifH/chlL_CS"/>
</dbReference>
<dbReference type="InterPro" id="IPR000392">
    <property type="entry name" value="NifH/frxC"/>
</dbReference>
<dbReference type="InterPro" id="IPR027417">
    <property type="entry name" value="P-loop_NTPase"/>
</dbReference>
<dbReference type="InterPro" id="IPR005971">
    <property type="entry name" value="Protochlorophyllide_ATP-bd"/>
</dbReference>
<dbReference type="NCBIfam" id="TIGR01281">
    <property type="entry name" value="DPOR_bchL"/>
    <property type="match status" value="1"/>
</dbReference>
<dbReference type="PANTHER" id="PTHR42864">
    <property type="entry name" value="LIGHT-INDEPENDENT PROTOCHLOROPHYLLIDE REDUCTASE IRON-SULFUR ATP-BINDING PROTEIN"/>
    <property type="match status" value="1"/>
</dbReference>
<dbReference type="PANTHER" id="PTHR42864:SF2">
    <property type="entry name" value="LIGHT-INDEPENDENT PROTOCHLOROPHYLLIDE REDUCTASE IRON-SULFUR ATP-BINDING PROTEIN"/>
    <property type="match status" value="1"/>
</dbReference>
<dbReference type="Pfam" id="PF00142">
    <property type="entry name" value="Fer4_NifH"/>
    <property type="match status" value="1"/>
</dbReference>
<dbReference type="PIRSF" id="PIRSF000363">
    <property type="entry name" value="Nitrogenase_iron"/>
    <property type="match status" value="1"/>
</dbReference>
<dbReference type="PRINTS" id="PR00091">
    <property type="entry name" value="NITROGNASEII"/>
</dbReference>
<dbReference type="SUPFAM" id="SSF52540">
    <property type="entry name" value="P-loop containing nucleoside triphosphate hydrolases"/>
    <property type="match status" value="1"/>
</dbReference>
<dbReference type="PROSITE" id="PS00746">
    <property type="entry name" value="NIFH_FRXC_1"/>
    <property type="match status" value="1"/>
</dbReference>
<dbReference type="PROSITE" id="PS00692">
    <property type="entry name" value="NIFH_FRXC_2"/>
    <property type="match status" value="1"/>
</dbReference>
<dbReference type="PROSITE" id="PS51026">
    <property type="entry name" value="NIFH_FRXC_3"/>
    <property type="match status" value="1"/>
</dbReference>
<name>CHLL_PINCO</name>
<organism>
    <name type="scientific">Pinus contorta</name>
    <name type="common">Shore pine</name>
    <name type="synonym">Lodgepole pine</name>
    <dbReference type="NCBI Taxonomy" id="3339"/>
    <lineage>
        <taxon>Eukaryota</taxon>
        <taxon>Viridiplantae</taxon>
        <taxon>Streptophyta</taxon>
        <taxon>Embryophyta</taxon>
        <taxon>Tracheophyta</taxon>
        <taxon>Spermatophyta</taxon>
        <taxon>Pinopsida</taxon>
        <taxon>Pinidae</taxon>
        <taxon>Conifers I</taxon>
        <taxon>Pinales</taxon>
        <taxon>Pinaceae</taxon>
        <taxon>Pinus</taxon>
        <taxon>Pinus subgen. Pinus</taxon>
    </lineage>
</organism>
<proteinExistence type="inferred from homology"/>
<evidence type="ECO:0000255" key="1">
    <source>
        <dbReference type="HAMAP-Rule" id="MF_00355"/>
    </source>
</evidence>
<feature type="chain" id="PRO_0000139564" description="Light-independent protochlorophyllide reductase iron-sulfur ATP-binding protein">
    <location>
        <begin position="1"/>
        <end position="291"/>
    </location>
</feature>
<feature type="binding site" evidence="1">
    <location>
        <begin position="10"/>
        <end position="15"/>
    </location>
    <ligand>
        <name>ATP</name>
        <dbReference type="ChEBI" id="CHEBI:30616"/>
    </ligand>
</feature>
<feature type="binding site" evidence="1">
    <location>
        <position position="14"/>
    </location>
    <ligand>
        <name>Mg(2+)</name>
        <dbReference type="ChEBI" id="CHEBI:18420"/>
    </ligand>
</feature>
<feature type="binding site" evidence="1">
    <location>
        <position position="39"/>
    </location>
    <ligand>
        <name>ATP</name>
        <dbReference type="ChEBI" id="CHEBI:30616"/>
    </ligand>
</feature>
<feature type="binding site" evidence="1">
    <location>
        <position position="95"/>
    </location>
    <ligand>
        <name>[4Fe-4S] cluster</name>
        <dbReference type="ChEBI" id="CHEBI:49883"/>
        <note>ligand shared between dimeric partners</note>
    </ligand>
</feature>
<feature type="binding site" evidence="1">
    <location>
        <position position="129"/>
    </location>
    <ligand>
        <name>[4Fe-4S] cluster</name>
        <dbReference type="ChEBI" id="CHEBI:49883"/>
        <note>ligand shared between dimeric partners</note>
    </ligand>
</feature>
<feature type="binding site" evidence="1">
    <location>
        <begin position="180"/>
        <end position="181"/>
    </location>
    <ligand>
        <name>ATP</name>
        <dbReference type="ChEBI" id="CHEBI:30616"/>
    </ligand>
</feature>
<accession>P26181</accession>
<reference key="1">
    <citation type="journal article" date="1991" name="Plant Mol. Biol.">
        <title>Homologues of the green algal gidA gene and the liverwort frxC gene are present on the chloroplast genomes of conifers.</title>
        <authorList>
            <person name="Lidholm J."/>
            <person name="Gustafsson P."/>
        </authorList>
    </citation>
    <scope>NUCLEOTIDE SEQUENCE [GENOMIC DNA]</scope>
    <source>
        <tissue>Leaf</tissue>
    </source>
</reference>
<protein>
    <recommendedName>
        <fullName evidence="1">Light-independent protochlorophyllide reductase iron-sulfur ATP-binding protein</fullName>
        <shortName evidence="1">DPOR subunit L</shortName>
        <shortName evidence="1">LI-POR subunit L</shortName>
        <ecNumber evidence="1">1.3.7.7</ecNumber>
    </recommendedName>
</protein>
<gene>
    <name evidence="1" type="primary">chlL</name>
    <name type="synonym">frxC</name>
</gene>
<sequence>MKIAVYGKGGIGKSTTSCNISVALARRGQKVLQIGCDPKHDSTFTLTGFLIPTIIDTLQSKDYHYEDIWPEDVIHKGYGGVDCVEAGGPPAGAGCGGYVVGETVKLLKELNAFYEYDIILFDVLGDVVCGGFAAPLNYADYCVIITDNGFDALFAANRITASIREKARTHPLRLAGLVGNRTSRRDLINKYVEACPMPVIEVLPIIEDIRVSRVKGKTLFEMVGSEPSLNYVCNYYLGIADQILSQPEGIVPKEIPDRELFSLLSDLYLNPIGGGGQKKNKKEILLGFTRI</sequence>
<geneLocation type="chloroplast"/>
<comment type="function">
    <text evidence="1">Component of the dark-operative protochlorophyllide reductase (DPOR) that uses Mg-ATP and reduced ferredoxin to reduce ring D of protochlorophyllide (Pchlide) to form chlorophyllide a (Chlide). This reaction is light-independent. The L component serves as a unique electron donor to the NB-component of the complex, and binds Mg-ATP.</text>
</comment>
<comment type="catalytic activity">
    <reaction evidence="1">
        <text>chlorophyllide a + oxidized 2[4Fe-4S]-[ferredoxin] + 2 ADP + 2 phosphate = protochlorophyllide a + reduced 2[4Fe-4S]-[ferredoxin] + 2 ATP + 2 H2O</text>
        <dbReference type="Rhea" id="RHEA:28202"/>
        <dbReference type="Rhea" id="RHEA-COMP:10002"/>
        <dbReference type="Rhea" id="RHEA-COMP:10004"/>
        <dbReference type="ChEBI" id="CHEBI:15377"/>
        <dbReference type="ChEBI" id="CHEBI:30616"/>
        <dbReference type="ChEBI" id="CHEBI:33722"/>
        <dbReference type="ChEBI" id="CHEBI:33723"/>
        <dbReference type="ChEBI" id="CHEBI:43474"/>
        <dbReference type="ChEBI" id="CHEBI:83348"/>
        <dbReference type="ChEBI" id="CHEBI:83350"/>
        <dbReference type="ChEBI" id="CHEBI:456216"/>
        <dbReference type="EC" id="1.3.7.7"/>
    </reaction>
</comment>
<comment type="cofactor">
    <cofactor evidence="1">
        <name>[4Fe-4S] cluster</name>
        <dbReference type="ChEBI" id="CHEBI:49883"/>
    </cofactor>
    <text evidence="1">Binds 1 [4Fe-4S] cluster per dimer.</text>
</comment>
<comment type="pathway">
    <text evidence="1">Porphyrin-containing compound metabolism; chlorophyll biosynthesis (light-independent).</text>
</comment>
<comment type="subunit">
    <text evidence="1">Homodimer. Protochlorophyllide reductase is composed of three subunits; ChlL, ChlN and ChlB.</text>
</comment>
<comment type="subcellular location">
    <subcellularLocation>
        <location>Plastid</location>
        <location>Chloroplast</location>
    </subcellularLocation>
</comment>
<comment type="similarity">
    <text evidence="1">Belongs to the NifH/BchL/ChlL family.</text>
</comment>